<proteinExistence type="evidence at transcript level"/>
<evidence type="ECO:0000250" key="1">
    <source>
        <dbReference type="UniProtKB" id="Q96RU8"/>
    </source>
</evidence>
<evidence type="ECO:0000255" key="2">
    <source>
        <dbReference type="PROSITE-ProRule" id="PRU00159"/>
    </source>
</evidence>
<evidence type="ECO:0000256" key="3">
    <source>
        <dbReference type="SAM" id="MobiDB-lite"/>
    </source>
</evidence>
<evidence type="ECO:0000269" key="4">
    <source>
    </source>
</evidence>
<evidence type="ECO:0000269" key="5">
    <source>
    </source>
</evidence>
<evidence type="ECO:0000269" key="6">
    <source>
    </source>
</evidence>
<evidence type="ECO:0000269" key="7">
    <source>
    </source>
</evidence>
<evidence type="ECO:0000303" key="8">
    <source>
    </source>
</evidence>
<evidence type="ECO:0000305" key="9"/>
<evidence type="ECO:0000312" key="10">
    <source>
        <dbReference type="EMBL" id="AAH06800.1"/>
    </source>
</evidence>
<evidence type="ECO:0000312" key="11">
    <source>
        <dbReference type="EMBL" id="BAC26038.1"/>
    </source>
</evidence>
<evidence type="ECO:0000312" key="12">
    <source>
        <dbReference type="EMBL" id="BAC28245.1"/>
    </source>
</evidence>
<evidence type="ECO:0000312" key="13">
    <source>
        <dbReference type="EMBL" id="BAC37854.1"/>
    </source>
</evidence>
<evidence type="ECO:0000312" key="14">
    <source>
        <dbReference type="EMBL" id="BAE37097.1"/>
    </source>
</evidence>
<evidence type="ECO:0000312" key="15">
    <source>
        <dbReference type="MGI" id="MGI:2443397"/>
    </source>
</evidence>
<organism>
    <name type="scientific">Mus musculus</name>
    <name type="common">Mouse</name>
    <dbReference type="NCBI Taxonomy" id="10090"/>
    <lineage>
        <taxon>Eukaryota</taxon>
        <taxon>Metazoa</taxon>
        <taxon>Chordata</taxon>
        <taxon>Craniata</taxon>
        <taxon>Vertebrata</taxon>
        <taxon>Euteleostomi</taxon>
        <taxon>Mammalia</taxon>
        <taxon>Eutheria</taxon>
        <taxon>Euarchontoglires</taxon>
        <taxon>Glires</taxon>
        <taxon>Rodentia</taxon>
        <taxon>Myomorpha</taxon>
        <taxon>Muroidea</taxon>
        <taxon>Muridae</taxon>
        <taxon>Murinae</taxon>
        <taxon>Mus</taxon>
        <taxon>Mus</taxon>
    </lineage>
</organism>
<name>TRIB1_MOUSE</name>
<sequence length="372" mass="41281">MRVGPVRFALSGASQPRGPGLLFPAARGTPAKRLLDTDDAGAVAAKCPRLSECSSPPDYLSPPGSPCSPQPPPSTQGTGGSCVSSPGPSRIADYLLLPLAEREHVSRALCIHTGRELRCKEFPIKHYQDKIRPYIQLPSHSNITGIVEVLLGESKAYVFFEKDFGDMHSYVRSRKRLREEEAARLFKQIVSAVAHCHQSAIVLGDLKLRKFVFSTEERTQLRLESLEDTHIIKGEDDALSDKHGCPAYVSPEILNTTGTYSGKAADVWSLGVMLYTLLVGRYPFHDSDPSALFSKIRRGQFCIPEHVSPKARCLIRSLLRREPSERLTAPQILLHPWFEYVLEPGYVDSEIGTSDQIVPEYQEDSDISSFFC</sequence>
<dbReference type="EMBL" id="AF358866">
    <property type="protein sequence ID" value="AAM45478.1"/>
    <property type="molecule type" value="mRNA"/>
</dbReference>
<dbReference type="EMBL" id="AK028626">
    <property type="protein sequence ID" value="BAC26038.1"/>
    <property type="molecule type" value="mRNA"/>
</dbReference>
<dbReference type="EMBL" id="AK033358">
    <property type="protein sequence ID" value="BAC28245.1"/>
    <property type="status" value="ALT_INIT"/>
    <property type="molecule type" value="mRNA"/>
</dbReference>
<dbReference type="EMBL" id="AK040738">
    <property type="protein sequence ID" value="BAC30688.1"/>
    <property type="molecule type" value="mRNA"/>
</dbReference>
<dbReference type="EMBL" id="AK041212">
    <property type="protein sequence ID" value="BAC30865.1"/>
    <property type="molecule type" value="mRNA"/>
</dbReference>
<dbReference type="EMBL" id="AK080228">
    <property type="protein sequence ID" value="BAC37854.1"/>
    <property type="status" value="ALT_INIT"/>
    <property type="molecule type" value="mRNA"/>
</dbReference>
<dbReference type="EMBL" id="AK162876">
    <property type="protein sequence ID" value="BAE37097.1"/>
    <property type="molecule type" value="mRNA"/>
</dbReference>
<dbReference type="EMBL" id="BC006800">
    <property type="protein sequence ID" value="AAH06800.1"/>
    <property type="molecule type" value="mRNA"/>
</dbReference>
<dbReference type="CCDS" id="CCDS27499.1">
    <molecule id="Q8K4K4-1"/>
</dbReference>
<dbReference type="RefSeq" id="NP_653132.1">
    <molecule id="Q8K4K4-1"/>
    <property type="nucleotide sequence ID" value="NM_144549.4"/>
</dbReference>
<dbReference type="SMR" id="Q8K4K4"/>
<dbReference type="BioGRID" id="229263">
    <property type="interactions" value="3"/>
</dbReference>
<dbReference type="FunCoup" id="Q8K4K4">
    <property type="interactions" value="2692"/>
</dbReference>
<dbReference type="IntAct" id="Q8K4K4">
    <property type="interactions" value="1"/>
</dbReference>
<dbReference type="STRING" id="10090.ENSMUSP00000068834"/>
<dbReference type="iPTMnet" id="Q8K4K4"/>
<dbReference type="PhosphoSitePlus" id="Q8K4K4"/>
<dbReference type="PaxDb" id="10090-ENSMUSP00000068834"/>
<dbReference type="ProteomicsDB" id="259096">
    <molecule id="Q8K4K4-1"/>
</dbReference>
<dbReference type="ProteomicsDB" id="259097">
    <molecule id="Q8K4K4-2"/>
</dbReference>
<dbReference type="Antibodypedia" id="27210">
    <property type="antibodies" value="380 antibodies from 31 providers"/>
</dbReference>
<dbReference type="DNASU" id="211770"/>
<dbReference type="Ensembl" id="ENSMUST00000067543.8">
    <molecule id="Q8K4K4-1"/>
    <property type="protein sequence ID" value="ENSMUSP00000068834.7"/>
    <property type="gene ID" value="ENSMUSG00000032501.10"/>
</dbReference>
<dbReference type="Ensembl" id="ENSMUST00000118228.2">
    <molecule id="Q8K4K4-2"/>
    <property type="protein sequence ID" value="ENSMUSP00000112828.2"/>
    <property type="gene ID" value="ENSMUSG00000032501.10"/>
</dbReference>
<dbReference type="GeneID" id="211770"/>
<dbReference type="KEGG" id="mmu:211770"/>
<dbReference type="UCSC" id="uc007vxw.1">
    <molecule id="Q8K4K4-1"/>
    <property type="organism name" value="mouse"/>
</dbReference>
<dbReference type="AGR" id="MGI:2443397"/>
<dbReference type="CTD" id="10221"/>
<dbReference type="MGI" id="MGI:2443397">
    <property type="gene designation" value="Trib1"/>
</dbReference>
<dbReference type="VEuPathDB" id="HostDB:ENSMUSG00000032501"/>
<dbReference type="eggNOG" id="KOG0583">
    <property type="taxonomic scope" value="Eukaryota"/>
</dbReference>
<dbReference type="GeneTree" id="ENSGT00950000182986"/>
<dbReference type="HOGENOM" id="CLU_000288_13_1_1"/>
<dbReference type="InParanoid" id="Q8K4K4"/>
<dbReference type="OMA" id="GPPDCLS"/>
<dbReference type="OrthoDB" id="410920at2759"/>
<dbReference type="PhylomeDB" id="Q8K4K4"/>
<dbReference type="TreeFam" id="TF329785"/>
<dbReference type="BioGRID-ORCS" id="211770">
    <property type="hits" value="5 hits in 82 CRISPR screens"/>
</dbReference>
<dbReference type="ChiTaRS" id="Trib1">
    <property type="organism name" value="mouse"/>
</dbReference>
<dbReference type="PRO" id="PR:Q8K4K4"/>
<dbReference type="Proteomes" id="UP000000589">
    <property type="component" value="Chromosome 15"/>
</dbReference>
<dbReference type="RNAct" id="Q8K4K4">
    <property type="molecule type" value="protein"/>
</dbReference>
<dbReference type="Bgee" id="ENSMUSG00000032501">
    <property type="expression patterns" value="Expressed in granulocyte and 181 other cell types or tissues"/>
</dbReference>
<dbReference type="GO" id="GO:0005737">
    <property type="term" value="C:cytoplasm"/>
    <property type="evidence" value="ECO:0007669"/>
    <property type="project" value="Ensembl"/>
</dbReference>
<dbReference type="GO" id="GO:0005634">
    <property type="term" value="C:nucleus"/>
    <property type="evidence" value="ECO:0007669"/>
    <property type="project" value="Ensembl"/>
</dbReference>
<dbReference type="GO" id="GO:0031434">
    <property type="term" value="F:mitogen-activated protein kinase kinase binding"/>
    <property type="evidence" value="ECO:0007669"/>
    <property type="project" value="Ensembl"/>
</dbReference>
<dbReference type="GO" id="GO:0004860">
    <property type="term" value="F:protein kinase inhibitor activity"/>
    <property type="evidence" value="ECO:0007669"/>
    <property type="project" value="UniProtKB-KW"/>
</dbReference>
<dbReference type="GO" id="GO:0061629">
    <property type="term" value="F:RNA polymerase II-specific DNA-binding transcription factor binding"/>
    <property type="evidence" value="ECO:0000353"/>
    <property type="project" value="BHF-UCL"/>
</dbReference>
<dbReference type="GO" id="GO:0140416">
    <property type="term" value="F:transcription regulator inhibitor activity"/>
    <property type="evidence" value="ECO:0000314"/>
    <property type="project" value="BHF-UCL"/>
</dbReference>
<dbReference type="GO" id="GO:0031625">
    <property type="term" value="F:ubiquitin protein ligase binding"/>
    <property type="evidence" value="ECO:0000314"/>
    <property type="project" value="BHF-UCL"/>
</dbReference>
<dbReference type="GO" id="GO:0055106">
    <property type="term" value="F:ubiquitin-protein transferase regulator activity"/>
    <property type="evidence" value="ECO:0000314"/>
    <property type="project" value="BHF-UCL"/>
</dbReference>
<dbReference type="GO" id="GO:0007254">
    <property type="term" value="P:JNK cascade"/>
    <property type="evidence" value="ECO:0007669"/>
    <property type="project" value="Ensembl"/>
</dbReference>
<dbReference type="GO" id="GO:0046329">
    <property type="term" value="P:negative regulation of JNK cascade"/>
    <property type="evidence" value="ECO:0000250"/>
    <property type="project" value="BHF-UCL"/>
</dbReference>
<dbReference type="GO" id="GO:0031665">
    <property type="term" value="P:negative regulation of lipopolysaccharide-mediated signaling pathway"/>
    <property type="evidence" value="ECO:0007669"/>
    <property type="project" value="Ensembl"/>
</dbReference>
<dbReference type="GO" id="GO:0043409">
    <property type="term" value="P:negative regulation of MAPK cascade"/>
    <property type="evidence" value="ECO:0000250"/>
    <property type="project" value="BHF-UCL"/>
</dbReference>
<dbReference type="GO" id="GO:0045659">
    <property type="term" value="P:negative regulation of neutrophil differentiation"/>
    <property type="evidence" value="ECO:0000315"/>
    <property type="project" value="CACAO"/>
</dbReference>
<dbReference type="GO" id="GO:0014912">
    <property type="term" value="P:negative regulation of smooth muscle cell migration"/>
    <property type="evidence" value="ECO:0007669"/>
    <property type="project" value="Ensembl"/>
</dbReference>
<dbReference type="GO" id="GO:0048662">
    <property type="term" value="P:negative regulation of smooth muscle cell proliferation"/>
    <property type="evidence" value="ECO:0007669"/>
    <property type="project" value="Ensembl"/>
</dbReference>
<dbReference type="GO" id="GO:0000122">
    <property type="term" value="P:negative regulation of transcription by RNA polymerase II"/>
    <property type="evidence" value="ECO:0000314"/>
    <property type="project" value="BHF-UCL"/>
</dbReference>
<dbReference type="GO" id="GO:0045645">
    <property type="term" value="P:positive regulation of eosinophil differentiation"/>
    <property type="evidence" value="ECO:0000315"/>
    <property type="project" value="CACAO"/>
</dbReference>
<dbReference type="GO" id="GO:0045651">
    <property type="term" value="P:positive regulation of macrophage differentiation"/>
    <property type="evidence" value="ECO:0000315"/>
    <property type="project" value="CACAO"/>
</dbReference>
<dbReference type="GO" id="GO:0032436">
    <property type="term" value="P:positive regulation of proteasomal ubiquitin-dependent protein catabolic process"/>
    <property type="evidence" value="ECO:0000314"/>
    <property type="project" value="BHF-UCL"/>
</dbReference>
<dbReference type="GO" id="GO:0043405">
    <property type="term" value="P:regulation of MAP kinase activity"/>
    <property type="evidence" value="ECO:0000250"/>
    <property type="project" value="UniProtKB"/>
</dbReference>
<dbReference type="GO" id="GO:0032496">
    <property type="term" value="P:response to lipopolysaccharide"/>
    <property type="evidence" value="ECO:0000315"/>
    <property type="project" value="BHF-UCL"/>
</dbReference>
<dbReference type="CDD" id="cd14023">
    <property type="entry name" value="PK_TRB1"/>
    <property type="match status" value="1"/>
</dbReference>
<dbReference type="FunFam" id="3.30.200.20:FF:000381">
    <property type="entry name" value="tribbles homolog 1"/>
    <property type="match status" value="1"/>
</dbReference>
<dbReference type="FunFam" id="1.10.510.10:FF:000153">
    <property type="entry name" value="Tribbles homolog 2"/>
    <property type="match status" value="1"/>
</dbReference>
<dbReference type="Gene3D" id="3.30.200.20">
    <property type="entry name" value="Phosphorylase Kinase, domain 1"/>
    <property type="match status" value="1"/>
</dbReference>
<dbReference type="Gene3D" id="1.10.510.10">
    <property type="entry name" value="Transferase(Phosphotransferase) domain 1"/>
    <property type="match status" value="1"/>
</dbReference>
<dbReference type="InterPro" id="IPR011009">
    <property type="entry name" value="Kinase-like_dom_sf"/>
</dbReference>
<dbReference type="InterPro" id="IPR000719">
    <property type="entry name" value="Prot_kinase_dom"/>
</dbReference>
<dbReference type="InterPro" id="IPR024105">
    <property type="entry name" value="TRB1_pseudokinase_dom"/>
</dbReference>
<dbReference type="InterPro" id="IPR024104">
    <property type="entry name" value="Tribbles/Ser_Thr_kinase_40"/>
</dbReference>
<dbReference type="PANTHER" id="PTHR22961">
    <property type="entry name" value="SER/THR PROTEIN KINASE-TRB"/>
    <property type="match status" value="1"/>
</dbReference>
<dbReference type="PANTHER" id="PTHR22961:SF17">
    <property type="entry name" value="TRIBBLES HOMOLOG 1"/>
    <property type="match status" value="1"/>
</dbReference>
<dbReference type="Pfam" id="PF00069">
    <property type="entry name" value="Pkinase"/>
    <property type="match status" value="1"/>
</dbReference>
<dbReference type="SMART" id="SM00220">
    <property type="entry name" value="S_TKc"/>
    <property type="match status" value="1"/>
</dbReference>
<dbReference type="SUPFAM" id="SSF56112">
    <property type="entry name" value="Protein kinase-like (PK-like)"/>
    <property type="match status" value="1"/>
</dbReference>
<dbReference type="PROSITE" id="PS50011">
    <property type="entry name" value="PROTEIN_KINASE_DOM"/>
    <property type="match status" value="1"/>
</dbReference>
<comment type="function">
    <text evidence="1 5 6 7">Adapter protein involved in protein degradation by interacting with COP1 ubiquitin ligase (PubMed:20410507, PubMed:23515163). Promotes CEBPA degradation and inhibits its function (PubMed:20410507). Controls macrophage, eosinophil and neutrophil differentiation via the COP1-binding domain (PubMed:23515163, PubMed:24003916). Regulates myeloid cell differentiation by altering the expression of CEBPA in a COP1-dependent manner (PubMed:23515163). Interacts with MAPK kinases and regulates activation of MAP kinases, but has no kinase activity (By similarity).</text>
</comment>
<comment type="subunit">
    <text evidence="1">Monomer. Interacts (via protein kinase domain) with CEBPA. Interacts with COP1.</text>
</comment>
<comment type="alternative products">
    <event type="alternative splicing"/>
    <isoform>
        <id>Q8K4K4-1</id>
        <name evidence="4">1</name>
        <sequence type="displayed"/>
    </isoform>
    <isoform>
        <id>Q8K4K4-2</id>
        <name evidence="9">2</name>
        <sequence type="described" ref="VSP_051888"/>
    </isoform>
</comment>
<comment type="domain">
    <text evidence="7">The COP1-binding motif (355-360) is required for regulation activity (PubMed:24003916).</text>
</comment>
<comment type="domain">
    <text evidence="1">The C-terminus (351-372) is required for interaction with COP1 (By similarity).</text>
</comment>
<comment type="domain">
    <text evidence="1">The protein kinase active site is incompatible with ATP binding and is inactive (By similarity).</text>
</comment>
<comment type="similarity">
    <text evidence="9">Belongs to the protein kinase superfamily. CAMK Ser/Thr protein kinase family. Tribbles subfamily.</text>
</comment>
<comment type="sequence caution" evidence="9">
    <conflict type="erroneous initiation">
        <sequence resource="EMBL-CDS" id="BAC28245"/>
    </conflict>
</comment>
<comment type="sequence caution" evidence="9">
    <conflict type="erroneous initiation">
        <sequence resource="EMBL-CDS" id="BAC37854"/>
    </conflict>
</comment>
<feature type="chain" id="PRO_0000131860" description="Tribbles homolog 1">
    <location>
        <begin position="1"/>
        <end position="372"/>
    </location>
</feature>
<feature type="domain" description="Protein kinase" evidence="2">
    <location>
        <begin position="91"/>
        <end position="338"/>
    </location>
</feature>
<feature type="region of interest" description="Disordered" evidence="3">
    <location>
        <begin position="1"/>
        <end position="26"/>
    </location>
</feature>
<feature type="region of interest" description="Disordered" evidence="3">
    <location>
        <begin position="49"/>
        <end position="85"/>
    </location>
</feature>
<feature type="short sequence motif" description="COP1-binding" evidence="7">
    <location>
        <begin position="355"/>
        <end position="360"/>
    </location>
</feature>
<feature type="compositionally biased region" description="Pro residues" evidence="3">
    <location>
        <begin position="59"/>
        <end position="74"/>
    </location>
</feature>
<feature type="splice variant" id="VSP_051888" description="In isoform 2." evidence="8">
    <location>
        <begin position="219"/>
        <end position="372"/>
    </location>
</feature>
<feature type="sequence conflict" description="In Ref. 1; AAM45478." evidence="9" ref="1">
    <original>E</original>
    <variation>G</variation>
    <location>
        <position position="224"/>
    </location>
</feature>
<feature type="sequence conflict" description="In Ref. 1; AAM45478." evidence="9" ref="1">
    <original>L</original>
    <variation>W</variation>
    <location>
        <position position="278"/>
    </location>
</feature>
<reference key="1">
    <citation type="journal article" date="2004" name="J. Biol. Chem.">
        <title>Human tribbles, a protein family controlling mitogen-activated protein kinase cascades.</title>
        <authorList>
            <person name="Kiss-Toth E."/>
            <person name="Bagstaff S.M."/>
            <person name="Sung H.Y."/>
            <person name="Jozsa V."/>
            <person name="Dempsey C."/>
            <person name="Caunt J.C."/>
            <person name="Oxley K.M."/>
            <person name="Wyllie D.H."/>
            <person name="Polgar T."/>
            <person name="Harte M."/>
            <person name="O'Neill L.A.J."/>
            <person name="Qwarnstrom E.E."/>
            <person name="Dower S.K."/>
        </authorList>
    </citation>
    <scope>NUCLEOTIDE SEQUENCE [MRNA] (ISOFORM 1)</scope>
</reference>
<reference evidence="9 12" key="2">
    <citation type="journal article" date="2005" name="Science">
        <title>The transcriptional landscape of the mammalian genome.</title>
        <authorList>
            <person name="Carninci P."/>
            <person name="Kasukawa T."/>
            <person name="Katayama S."/>
            <person name="Gough J."/>
            <person name="Frith M.C."/>
            <person name="Maeda N."/>
            <person name="Oyama R."/>
            <person name="Ravasi T."/>
            <person name="Lenhard B."/>
            <person name="Wells C."/>
            <person name="Kodzius R."/>
            <person name="Shimokawa K."/>
            <person name="Bajic V.B."/>
            <person name="Brenner S.E."/>
            <person name="Batalov S."/>
            <person name="Forrest A.R."/>
            <person name="Zavolan M."/>
            <person name="Davis M.J."/>
            <person name="Wilming L.G."/>
            <person name="Aidinis V."/>
            <person name="Allen J.E."/>
            <person name="Ambesi-Impiombato A."/>
            <person name="Apweiler R."/>
            <person name="Aturaliya R.N."/>
            <person name="Bailey T.L."/>
            <person name="Bansal M."/>
            <person name="Baxter L."/>
            <person name="Beisel K.W."/>
            <person name="Bersano T."/>
            <person name="Bono H."/>
            <person name="Chalk A.M."/>
            <person name="Chiu K.P."/>
            <person name="Choudhary V."/>
            <person name="Christoffels A."/>
            <person name="Clutterbuck D.R."/>
            <person name="Crowe M.L."/>
            <person name="Dalla E."/>
            <person name="Dalrymple B.P."/>
            <person name="de Bono B."/>
            <person name="Della Gatta G."/>
            <person name="di Bernardo D."/>
            <person name="Down T."/>
            <person name="Engstrom P."/>
            <person name="Fagiolini M."/>
            <person name="Faulkner G."/>
            <person name="Fletcher C.F."/>
            <person name="Fukushima T."/>
            <person name="Furuno M."/>
            <person name="Futaki S."/>
            <person name="Gariboldi M."/>
            <person name="Georgii-Hemming P."/>
            <person name="Gingeras T.R."/>
            <person name="Gojobori T."/>
            <person name="Green R.E."/>
            <person name="Gustincich S."/>
            <person name="Harbers M."/>
            <person name="Hayashi Y."/>
            <person name="Hensch T.K."/>
            <person name="Hirokawa N."/>
            <person name="Hill D."/>
            <person name="Huminiecki L."/>
            <person name="Iacono M."/>
            <person name="Ikeo K."/>
            <person name="Iwama A."/>
            <person name="Ishikawa T."/>
            <person name="Jakt M."/>
            <person name="Kanapin A."/>
            <person name="Katoh M."/>
            <person name="Kawasawa Y."/>
            <person name="Kelso J."/>
            <person name="Kitamura H."/>
            <person name="Kitano H."/>
            <person name="Kollias G."/>
            <person name="Krishnan S.P."/>
            <person name="Kruger A."/>
            <person name="Kummerfeld S.K."/>
            <person name="Kurochkin I.V."/>
            <person name="Lareau L.F."/>
            <person name="Lazarevic D."/>
            <person name="Lipovich L."/>
            <person name="Liu J."/>
            <person name="Liuni S."/>
            <person name="McWilliam S."/>
            <person name="Madan Babu M."/>
            <person name="Madera M."/>
            <person name="Marchionni L."/>
            <person name="Matsuda H."/>
            <person name="Matsuzawa S."/>
            <person name="Miki H."/>
            <person name="Mignone F."/>
            <person name="Miyake S."/>
            <person name="Morris K."/>
            <person name="Mottagui-Tabar S."/>
            <person name="Mulder N."/>
            <person name="Nakano N."/>
            <person name="Nakauchi H."/>
            <person name="Ng P."/>
            <person name="Nilsson R."/>
            <person name="Nishiguchi S."/>
            <person name="Nishikawa S."/>
            <person name="Nori F."/>
            <person name="Ohara O."/>
            <person name="Okazaki Y."/>
            <person name="Orlando V."/>
            <person name="Pang K.C."/>
            <person name="Pavan W.J."/>
            <person name="Pavesi G."/>
            <person name="Pesole G."/>
            <person name="Petrovsky N."/>
            <person name="Piazza S."/>
            <person name="Reed J."/>
            <person name="Reid J.F."/>
            <person name="Ring B.Z."/>
            <person name="Ringwald M."/>
            <person name="Rost B."/>
            <person name="Ruan Y."/>
            <person name="Salzberg S.L."/>
            <person name="Sandelin A."/>
            <person name="Schneider C."/>
            <person name="Schoenbach C."/>
            <person name="Sekiguchi K."/>
            <person name="Semple C.A."/>
            <person name="Seno S."/>
            <person name="Sessa L."/>
            <person name="Sheng Y."/>
            <person name="Shibata Y."/>
            <person name="Shimada H."/>
            <person name="Shimada K."/>
            <person name="Silva D."/>
            <person name="Sinclair B."/>
            <person name="Sperling S."/>
            <person name="Stupka E."/>
            <person name="Sugiura K."/>
            <person name="Sultana R."/>
            <person name="Takenaka Y."/>
            <person name="Taki K."/>
            <person name="Tammoja K."/>
            <person name="Tan S.L."/>
            <person name="Tang S."/>
            <person name="Taylor M.S."/>
            <person name="Tegner J."/>
            <person name="Teichmann S.A."/>
            <person name="Ueda H.R."/>
            <person name="van Nimwegen E."/>
            <person name="Verardo R."/>
            <person name="Wei C.L."/>
            <person name="Yagi K."/>
            <person name="Yamanishi H."/>
            <person name="Zabarovsky E."/>
            <person name="Zhu S."/>
            <person name="Zimmer A."/>
            <person name="Hide W."/>
            <person name="Bult C."/>
            <person name="Grimmond S.M."/>
            <person name="Teasdale R.D."/>
            <person name="Liu E.T."/>
            <person name="Brusic V."/>
            <person name="Quackenbush J."/>
            <person name="Wahlestedt C."/>
            <person name="Mattick J.S."/>
            <person name="Hume D.A."/>
            <person name="Kai C."/>
            <person name="Sasaki D."/>
            <person name="Tomaru Y."/>
            <person name="Fukuda S."/>
            <person name="Kanamori-Katayama M."/>
            <person name="Suzuki M."/>
            <person name="Aoki J."/>
            <person name="Arakawa T."/>
            <person name="Iida J."/>
            <person name="Imamura K."/>
            <person name="Itoh M."/>
            <person name="Kato T."/>
            <person name="Kawaji H."/>
            <person name="Kawagashira N."/>
            <person name="Kawashima T."/>
            <person name="Kojima M."/>
            <person name="Kondo S."/>
            <person name="Konno H."/>
            <person name="Nakano K."/>
            <person name="Ninomiya N."/>
            <person name="Nishio T."/>
            <person name="Okada M."/>
            <person name="Plessy C."/>
            <person name="Shibata K."/>
            <person name="Shiraki T."/>
            <person name="Suzuki S."/>
            <person name="Tagami M."/>
            <person name="Waki K."/>
            <person name="Watahiki A."/>
            <person name="Okamura-Oho Y."/>
            <person name="Suzuki H."/>
            <person name="Kawai J."/>
            <person name="Hayashizaki Y."/>
        </authorList>
    </citation>
    <scope>NUCLEOTIDE SEQUENCE [LARGE SCALE MRNA] (ISOFORMS 1 AND 2)</scope>
    <source>
        <strain evidence="13">C57BL/6J</strain>
        <tissue evidence="13">Aorta</tissue>
        <tissue evidence="14">Hypothalamus</tissue>
        <tissue evidence="12">Lung</tissue>
        <tissue evidence="11">Skin</tissue>
        <tissue evidence="13">Vein</tissue>
    </source>
</reference>
<reference evidence="9 10" key="3">
    <citation type="journal article" date="2004" name="Genome Res.">
        <title>The status, quality, and expansion of the NIH full-length cDNA project: the Mammalian Gene Collection (MGC).</title>
        <authorList>
            <consortium name="The MGC Project Team"/>
        </authorList>
    </citation>
    <scope>NUCLEOTIDE SEQUENCE [LARGE SCALE MRNA] (ISOFORM 1)</scope>
    <source>
        <strain evidence="10">FVB/N-3</strain>
        <tissue evidence="10">Mammary gland</tissue>
    </source>
</reference>
<reference key="4">
    <citation type="journal article" date="2010" name="Blood">
        <title>Differential ability of Tribbles family members to promote degradation of C/EBPalpha and induce acute myelogenous leukemia.</title>
        <authorList>
            <person name="Dedhia P.H."/>
            <person name="Keeshan K."/>
            <person name="Uljon S."/>
            <person name="Xu L."/>
            <person name="Vega M.E."/>
            <person name="Shestova O."/>
            <person name="Zaks-Zilberman M."/>
            <person name="Romany C."/>
            <person name="Blacklow S.C."/>
            <person name="Pear W.S."/>
        </authorList>
    </citation>
    <scope>FUNCTION</scope>
</reference>
<reference key="5">
    <citation type="journal article" date="2013" name="Diabetes Obes. Metab. Suppl.">
        <title>Macrophages control innate inflammation.</title>
        <authorList>
            <person name="Akira S."/>
            <person name="Misawa T."/>
            <person name="Satoh T."/>
            <person name="Saitoh T."/>
        </authorList>
    </citation>
    <scope>FUNCTION</scope>
    <scope>DOMAIN</scope>
</reference>
<reference key="6">
    <citation type="journal article" date="2013" name="Nature">
        <title>Critical role of Trib1 in differentiation of tissue-resident M2-like macrophages.</title>
        <authorList>
            <person name="Satoh T."/>
            <person name="Kidoya H."/>
            <person name="Naito H."/>
            <person name="Yamamoto M."/>
            <person name="Takemura N."/>
            <person name="Nakagawa K."/>
            <person name="Yoshioka Y."/>
            <person name="Morii E."/>
            <person name="Takakura N."/>
            <person name="Takeuchi O."/>
            <person name="Akira S."/>
        </authorList>
    </citation>
    <scope>FUNCTION</scope>
</reference>
<keyword id="KW-0025">Alternative splicing</keyword>
<keyword id="KW-0649">Protein kinase inhibitor</keyword>
<keyword id="KW-1185">Reference proteome</keyword>
<protein>
    <recommendedName>
        <fullName>Tribbles homolog 1</fullName>
        <shortName>TRB-1</shortName>
    </recommendedName>
</protein>
<accession>Q8K4K4</accession>
<accession>Q8BFS7</accession>
<accession>Q8BJR9</accession>
<accession>Q8BZX3</accession>
<accession>Q91W04</accession>
<gene>
    <name evidence="15" type="primary">Trib1</name>
    <name evidence="15" type="synonym">Trb1</name>
</gene>